<reference key="1">
    <citation type="journal article" date="1989" name="EMBO J.">
        <title>The Drosophila hairy protein acts in both segmentation and bristle patterning and shows homology to N-myc.</title>
        <authorList>
            <person name="Rushlow C.A."/>
            <person name="Hogan A."/>
            <person name="Pierchin S.M."/>
            <person name="Howe K.M."/>
            <person name="Lardelli M."/>
            <person name="Ish-Horowicz D."/>
        </authorList>
    </citation>
    <scope>NUCLEOTIDE SEQUENCE [GENOMIC DNA / MRNA]</scope>
    <scope>VARIANT SER-292</scope>
    <source>
        <strain>Oregon-R</strain>
    </source>
</reference>
<reference key="2">
    <citation type="journal article" date="2002" name="Genetics">
        <title>hairy. A quantitative trait locus for Drosophila sensory bristle number.</title>
        <authorList>
            <person name="Robin C."/>
            <person name="Lyman R.F."/>
            <person name="Long A.D."/>
            <person name="Langley C.H."/>
            <person name="Mackay T.F.C."/>
        </authorList>
    </citation>
    <scope>NUCLEOTIDE SEQUENCE [GENOMIC DNA]</scope>
    <scope>VARIANT SER-21</scope>
    <source>
        <strain>R3-105</strain>
        <strain>R3-107</strain>
        <strain>R3-19</strain>
        <strain>R3-2</strain>
        <strain>R3-24</strain>
        <strain>R3-48</strain>
        <strain>R3-53</strain>
        <strain>R3-6</strain>
        <strain>R3-74</strain>
        <strain>R3-95</strain>
    </source>
</reference>
<reference key="3">
    <citation type="journal article" date="2000" name="Science">
        <title>The genome sequence of Drosophila melanogaster.</title>
        <authorList>
            <person name="Adams M.D."/>
            <person name="Celniker S.E."/>
            <person name="Holt R.A."/>
            <person name="Evans C.A."/>
            <person name="Gocayne J.D."/>
            <person name="Amanatides P.G."/>
            <person name="Scherer S.E."/>
            <person name="Li P.W."/>
            <person name="Hoskins R.A."/>
            <person name="Galle R.F."/>
            <person name="George R.A."/>
            <person name="Lewis S.E."/>
            <person name="Richards S."/>
            <person name="Ashburner M."/>
            <person name="Henderson S.N."/>
            <person name="Sutton G.G."/>
            <person name="Wortman J.R."/>
            <person name="Yandell M.D."/>
            <person name="Zhang Q."/>
            <person name="Chen L.X."/>
            <person name="Brandon R.C."/>
            <person name="Rogers Y.-H.C."/>
            <person name="Blazej R.G."/>
            <person name="Champe M."/>
            <person name="Pfeiffer B.D."/>
            <person name="Wan K.H."/>
            <person name="Doyle C."/>
            <person name="Baxter E.G."/>
            <person name="Helt G."/>
            <person name="Nelson C.R."/>
            <person name="Miklos G.L.G."/>
            <person name="Abril J.F."/>
            <person name="Agbayani A."/>
            <person name="An H.-J."/>
            <person name="Andrews-Pfannkoch C."/>
            <person name="Baldwin D."/>
            <person name="Ballew R.M."/>
            <person name="Basu A."/>
            <person name="Baxendale J."/>
            <person name="Bayraktaroglu L."/>
            <person name="Beasley E.M."/>
            <person name="Beeson K.Y."/>
            <person name="Benos P.V."/>
            <person name="Berman B.P."/>
            <person name="Bhandari D."/>
            <person name="Bolshakov S."/>
            <person name="Borkova D."/>
            <person name="Botchan M.R."/>
            <person name="Bouck J."/>
            <person name="Brokstein P."/>
            <person name="Brottier P."/>
            <person name="Burtis K.C."/>
            <person name="Busam D.A."/>
            <person name="Butler H."/>
            <person name="Cadieu E."/>
            <person name="Center A."/>
            <person name="Chandra I."/>
            <person name="Cherry J.M."/>
            <person name="Cawley S."/>
            <person name="Dahlke C."/>
            <person name="Davenport L.B."/>
            <person name="Davies P."/>
            <person name="de Pablos B."/>
            <person name="Delcher A."/>
            <person name="Deng Z."/>
            <person name="Mays A.D."/>
            <person name="Dew I."/>
            <person name="Dietz S.M."/>
            <person name="Dodson K."/>
            <person name="Doup L.E."/>
            <person name="Downes M."/>
            <person name="Dugan-Rocha S."/>
            <person name="Dunkov B.C."/>
            <person name="Dunn P."/>
            <person name="Durbin K.J."/>
            <person name="Evangelista C.C."/>
            <person name="Ferraz C."/>
            <person name="Ferriera S."/>
            <person name="Fleischmann W."/>
            <person name="Fosler C."/>
            <person name="Gabrielian A.E."/>
            <person name="Garg N.S."/>
            <person name="Gelbart W.M."/>
            <person name="Glasser K."/>
            <person name="Glodek A."/>
            <person name="Gong F."/>
            <person name="Gorrell J.H."/>
            <person name="Gu Z."/>
            <person name="Guan P."/>
            <person name="Harris M."/>
            <person name="Harris N.L."/>
            <person name="Harvey D.A."/>
            <person name="Heiman T.J."/>
            <person name="Hernandez J.R."/>
            <person name="Houck J."/>
            <person name="Hostin D."/>
            <person name="Houston K.A."/>
            <person name="Howland T.J."/>
            <person name="Wei M.-H."/>
            <person name="Ibegwam C."/>
            <person name="Jalali M."/>
            <person name="Kalush F."/>
            <person name="Karpen G.H."/>
            <person name="Ke Z."/>
            <person name="Kennison J.A."/>
            <person name="Ketchum K.A."/>
            <person name="Kimmel B.E."/>
            <person name="Kodira C.D."/>
            <person name="Kraft C.L."/>
            <person name="Kravitz S."/>
            <person name="Kulp D."/>
            <person name="Lai Z."/>
            <person name="Lasko P."/>
            <person name="Lei Y."/>
            <person name="Levitsky A.A."/>
            <person name="Li J.H."/>
            <person name="Li Z."/>
            <person name="Liang Y."/>
            <person name="Lin X."/>
            <person name="Liu X."/>
            <person name="Mattei B."/>
            <person name="McIntosh T.C."/>
            <person name="McLeod M.P."/>
            <person name="McPherson D."/>
            <person name="Merkulov G."/>
            <person name="Milshina N.V."/>
            <person name="Mobarry C."/>
            <person name="Morris J."/>
            <person name="Moshrefi A."/>
            <person name="Mount S.M."/>
            <person name="Moy M."/>
            <person name="Murphy B."/>
            <person name="Murphy L."/>
            <person name="Muzny D.M."/>
            <person name="Nelson D.L."/>
            <person name="Nelson D.R."/>
            <person name="Nelson K.A."/>
            <person name="Nixon K."/>
            <person name="Nusskern D.R."/>
            <person name="Pacleb J.M."/>
            <person name="Palazzolo M."/>
            <person name="Pittman G.S."/>
            <person name="Pan S."/>
            <person name="Pollard J."/>
            <person name="Puri V."/>
            <person name="Reese M.G."/>
            <person name="Reinert K."/>
            <person name="Remington K."/>
            <person name="Saunders R.D.C."/>
            <person name="Scheeler F."/>
            <person name="Shen H."/>
            <person name="Shue B.C."/>
            <person name="Siden-Kiamos I."/>
            <person name="Simpson M."/>
            <person name="Skupski M.P."/>
            <person name="Smith T.J."/>
            <person name="Spier E."/>
            <person name="Spradling A.C."/>
            <person name="Stapleton M."/>
            <person name="Strong R."/>
            <person name="Sun E."/>
            <person name="Svirskas R."/>
            <person name="Tector C."/>
            <person name="Turner R."/>
            <person name="Venter E."/>
            <person name="Wang A.H."/>
            <person name="Wang X."/>
            <person name="Wang Z.-Y."/>
            <person name="Wassarman D.A."/>
            <person name="Weinstock G.M."/>
            <person name="Weissenbach J."/>
            <person name="Williams S.M."/>
            <person name="Woodage T."/>
            <person name="Worley K.C."/>
            <person name="Wu D."/>
            <person name="Yang S."/>
            <person name="Yao Q.A."/>
            <person name="Ye J."/>
            <person name="Yeh R.-F."/>
            <person name="Zaveri J.S."/>
            <person name="Zhan M."/>
            <person name="Zhang G."/>
            <person name="Zhao Q."/>
            <person name="Zheng L."/>
            <person name="Zheng X.H."/>
            <person name="Zhong F.N."/>
            <person name="Zhong W."/>
            <person name="Zhou X."/>
            <person name="Zhu S.C."/>
            <person name="Zhu X."/>
            <person name="Smith H.O."/>
            <person name="Gibbs R.A."/>
            <person name="Myers E.W."/>
            <person name="Rubin G.M."/>
            <person name="Venter J.C."/>
        </authorList>
    </citation>
    <scope>NUCLEOTIDE SEQUENCE [LARGE SCALE GENOMIC DNA]</scope>
    <source>
        <strain>Berkeley</strain>
    </source>
</reference>
<reference key="4">
    <citation type="journal article" date="2002" name="Genome Biol.">
        <title>Annotation of the Drosophila melanogaster euchromatic genome: a systematic review.</title>
        <authorList>
            <person name="Misra S."/>
            <person name="Crosby M.A."/>
            <person name="Mungall C.J."/>
            <person name="Matthews B.B."/>
            <person name="Campbell K.S."/>
            <person name="Hradecky P."/>
            <person name="Huang Y."/>
            <person name="Kaminker J.S."/>
            <person name="Millburn G.H."/>
            <person name="Prochnik S.E."/>
            <person name="Smith C.D."/>
            <person name="Tupy J.L."/>
            <person name="Whitfield E.J."/>
            <person name="Bayraktaroglu L."/>
            <person name="Berman B.P."/>
            <person name="Bettencourt B.R."/>
            <person name="Celniker S.E."/>
            <person name="de Grey A.D.N.J."/>
            <person name="Drysdale R.A."/>
            <person name="Harris N.L."/>
            <person name="Richter J."/>
            <person name="Russo S."/>
            <person name="Schroeder A.J."/>
            <person name="Shu S.Q."/>
            <person name="Stapleton M."/>
            <person name="Yamada C."/>
            <person name="Ashburner M."/>
            <person name="Gelbart W.M."/>
            <person name="Rubin G.M."/>
            <person name="Lewis S.E."/>
        </authorList>
    </citation>
    <scope>GENOME REANNOTATION</scope>
    <source>
        <strain>Berkeley</strain>
    </source>
</reference>
<reference key="5">
    <citation type="journal article" date="2002" name="Genome Biol.">
        <title>A Drosophila full-length cDNA resource.</title>
        <authorList>
            <person name="Stapleton M."/>
            <person name="Carlson J.W."/>
            <person name="Brokstein P."/>
            <person name="Yu C."/>
            <person name="Champe M."/>
            <person name="George R.A."/>
            <person name="Guarin H."/>
            <person name="Kronmiller B."/>
            <person name="Pacleb J.M."/>
            <person name="Park S."/>
            <person name="Wan K.H."/>
            <person name="Rubin G.M."/>
            <person name="Celniker S.E."/>
        </authorList>
    </citation>
    <scope>NUCLEOTIDE SEQUENCE [LARGE SCALE MRNA]</scope>
    <source>
        <strain>Berkeley</strain>
        <tissue>Embryo</tissue>
    </source>
</reference>
<reference key="6">
    <citation type="journal article" date="1994" name="Cell">
        <title>Groucho is required for Drosophila neurogenesis, segmentation, and sex determination and interacts directly with hairy-related bHLH proteins.</title>
        <authorList>
            <person name="Paroush Z."/>
            <person name="Finley R.L. Jr."/>
            <person name="Kidd T."/>
            <person name="Wainwright S.M."/>
            <person name="Ingham P.W."/>
            <person name="Brent R."/>
            <person name="Ish-Horowicz D."/>
        </authorList>
    </citation>
    <scope>DOMAIN WRPW MOTIF</scope>
</reference>
<reference key="7">
    <citation type="journal article" date="1996" name="Mol. Cell. Biol.">
        <title>The WRPW motif of the hairy-related basic helix-loop-helix repressor proteins acts as a 4-amino-acid transcription repression and protein-protein interaction domain.</title>
        <authorList>
            <person name="Fisher A.L."/>
            <person name="Ohsako S."/>
            <person name="Caudy M."/>
        </authorList>
    </citation>
    <scope>FUNCTION</scope>
    <scope>INTERACTION WITH GRO</scope>
    <scope>DOMAIN WRPW MOTIF</scope>
</reference>
<reference key="8">
    <citation type="journal article" date="2004" name="J. Biol. Chem.">
        <title>Drosophila Topors is a RING finger-containing protein that functions as a ubiquitin-protein isopeptide ligase for the hairy basic helix-loop-helix repressor protein.</title>
        <authorList>
            <person name="Secombe J."/>
            <person name="Parkhurst S.M."/>
        </authorList>
    </citation>
    <scope>DNA-BINDING</scope>
    <scope>INTERACTION WITH TOPORS</scope>
    <scope>UBIQUITINATION</scope>
</reference>
<proteinExistence type="evidence at protein level"/>
<comment type="function">
    <text evidence="9">Pair-rule protein that regulates embryonic segmentation and adult bristle patterning. Transcriptional repressor of genes that require a bHLH protein for their transcription (e.g. ftz).</text>
</comment>
<comment type="subunit">
    <text evidence="6 9">Transcription repression requires formation of a complex with a corepressor protein (Groucho). Interacts with gro (via WPRW motif) and Topors.</text>
</comment>
<comment type="interaction">
    <interactant intactId="EBI-123011">
        <id>P14003</id>
    </interactant>
    <interactant intactId="EBI-159330">
        <id>O46036</id>
        <label>CtBP</label>
    </interactant>
    <organismsDiffer>false</organismsDiffer>
    <experiments>4</experiments>
</comment>
<comment type="interaction">
    <interactant intactId="EBI-123011">
        <id>P14003</id>
    </interactant>
    <interactant intactId="EBI-186615">
        <id>Q9VNJ0</id>
        <label>dgrn</label>
    </interactant>
    <organismsDiffer>false</organismsDiffer>
    <experiments>5</experiments>
</comment>
<comment type="interaction">
    <interactant intactId="EBI-123011">
        <id>P14003</id>
    </interactant>
    <interactant intactId="EBI-153866">
        <id>P16371</id>
        <label>gro</label>
    </interactant>
    <organismsDiffer>false</organismsDiffer>
    <experiments>6</experiments>
</comment>
<comment type="interaction">
    <interactant intactId="EBI-123011">
        <id>P14003</id>
    </interactant>
    <interactant intactId="EBI-15661898">
        <id>P16371-2</id>
        <label>gro</label>
    </interactant>
    <organismsDiffer>false</organismsDiffer>
    <experiments>2</experiments>
</comment>
<comment type="interaction">
    <interactant intactId="EBI-123011">
        <id>P14003</id>
    </interactant>
    <interactant intactId="EBI-147805">
        <id>Q9V8P9</id>
        <label>Topors</label>
    </interactant>
    <organismsDiffer>false</organismsDiffer>
    <experiments>4</experiments>
</comment>
<comment type="interaction">
    <interactant intactId="EBI-123011">
        <id>P14003</id>
    </interactant>
    <interactant intactId="EBI-202590">
        <id>P83949</id>
        <label>Ubx</label>
    </interactant>
    <organismsDiffer>false</organismsDiffer>
    <experiments>3</experiments>
</comment>
<comment type="subcellular location">
    <subcellularLocation>
        <location evidence="2 3">Nucleus</location>
    </subcellularLocation>
</comment>
<comment type="domain">
    <text evidence="1">Has a particular type of basic domain (presence of a helix-interrupting proline) that binds to the N-box (CACNAG), rather than the canonical E-box (CANNTG).</text>
</comment>
<comment type="domain">
    <text evidence="8 9">The C-terminal WRPW motif is a transcriptional repression domain necessary for the interaction with Groucho (gro), a transcriptional corepressor recruited to specific target DNA by Hairy-related proteins.</text>
</comment>
<comment type="PTM">
    <text evidence="6">Ubiquitinated by Topors.</text>
</comment>
<protein>
    <recommendedName>
        <fullName evidence="10">Protein hairy</fullName>
    </recommendedName>
</protein>
<dbReference type="EMBL" id="X15904">
    <property type="protein sequence ID" value="CAA34018.1"/>
    <property type="molecule type" value="Genomic_DNA"/>
</dbReference>
<dbReference type="EMBL" id="X15905">
    <property type="protein sequence ID" value="CAA34019.1"/>
    <property type="molecule type" value="mRNA"/>
</dbReference>
<dbReference type="EMBL" id="AY055833">
    <property type="protein sequence ID" value="AAL17767.1"/>
    <property type="molecule type" value="Genomic_DNA"/>
</dbReference>
<dbReference type="EMBL" id="AY055834">
    <property type="protein sequence ID" value="AAL17768.1"/>
    <property type="molecule type" value="Genomic_DNA"/>
</dbReference>
<dbReference type="EMBL" id="AY055835">
    <property type="protein sequence ID" value="AAL17769.1"/>
    <property type="molecule type" value="Genomic_DNA"/>
</dbReference>
<dbReference type="EMBL" id="AY055836">
    <property type="protein sequence ID" value="AAL17770.1"/>
    <property type="molecule type" value="Genomic_DNA"/>
</dbReference>
<dbReference type="EMBL" id="AY055837">
    <property type="protein sequence ID" value="AAL17771.1"/>
    <property type="molecule type" value="Genomic_DNA"/>
</dbReference>
<dbReference type="EMBL" id="AY055838">
    <property type="protein sequence ID" value="AAL17772.1"/>
    <property type="molecule type" value="Genomic_DNA"/>
</dbReference>
<dbReference type="EMBL" id="AY055839">
    <property type="protein sequence ID" value="AAL17773.1"/>
    <property type="molecule type" value="Genomic_DNA"/>
</dbReference>
<dbReference type="EMBL" id="AY055840">
    <property type="protein sequence ID" value="AAL17774.1"/>
    <property type="molecule type" value="Genomic_DNA"/>
</dbReference>
<dbReference type="EMBL" id="AY055841">
    <property type="protein sequence ID" value="AAL17775.1"/>
    <property type="molecule type" value="Genomic_DNA"/>
</dbReference>
<dbReference type="EMBL" id="AY055842">
    <property type="protein sequence ID" value="AAL17776.1"/>
    <property type="molecule type" value="Genomic_DNA"/>
</dbReference>
<dbReference type="EMBL" id="AE014296">
    <property type="protein sequence ID" value="AAF50378.1"/>
    <property type="molecule type" value="Genomic_DNA"/>
</dbReference>
<dbReference type="EMBL" id="AE014296">
    <property type="protein sequence ID" value="AAX52752.1"/>
    <property type="molecule type" value="Genomic_DNA"/>
</dbReference>
<dbReference type="EMBL" id="AY119633">
    <property type="protein sequence ID" value="AAM50287.1"/>
    <property type="molecule type" value="mRNA"/>
</dbReference>
<dbReference type="PIR" id="S06956">
    <property type="entry name" value="S06956"/>
</dbReference>
<dbReference type="RefSeq" id="NP_001014577.1">
    <property type="nucleotide sequence ID" value="NM_001014577.2"/>
</dbReference>
<dbReference type="RefSeq" id="NP_523977.2">
    <property type="nucleotide sequence ID" value="NM_079253.4"/>
</dbReference>
<dbReference type="SMR" id="P14003"/>
<dbReference type="BioGRID" id="64402">
    <property type="interactions" value="46"/>
</dbReference>
<dbReference type="DIP" id="DIP-637N"/>
<dbReference type="ELM" id="P14003"/>
<dbReference type="FunCoup" id="P14003">
    <property type="interactions" value="133"/>
</dbReference>
<dbReference type="IntAct" id="P14003">
    <property type="interactions" value="17"/>
</dbReference>
<dbReference type="MINT" id="P14003"/>
<dbReference type="STRING" id="7227.FBpp0099504"/>
<dbReference type="PaxDb" id="7227-FBpp0099504"/>
<dbReference type="EnsemblMetazoa" id="FBtr0076569">
    <property type="protein sequence ID" value="FBpp0076296"/>
    <property type="gene ID" value="FBgn0001168"/>
</dbReference>
<dbReference type="EnsemblMetazoa" id="FBtr0100153">
    <property type="protein sequence ID" value="FBpp0099504"/>
    <property type="gene ID" value="FBgn0001168"/>
</dbReference>
<dbReference type="GeneID" id="38995"/>
<dbReference type="KEGG" id="dme:Dmel_CG6494"/>
<dbReference type="UCSC" id="CG6494-RA">
    <property type="organism name" value="d. melanogaster"/>
</dbReference>
<dbReference type="AGR" id="FB:FBgn0001168"/>
<dbReference type="CTD" id="38995"/>
<dbReference type="FlyBase" id="FBgn0001168">
    <property type="gene designation" value="hry"/>
</dbReference>
<dbReference type="VEuPathDB" id="VectorBase:FBgn0001168"/>
<dbReference type="eggNOG" id="KOG4304">
    <property type="taxonomic scope" value="Eukaryota"/>
</dbReference>
<dbReference type="GeneTree" id="ENSGT00940000166705"/>
<dbReference type="HOGENOM" id="CLU_068550_2_1_1"/>
<dbReference type="InParanoid" id="P14003"/>
<dbReference type="OMA" id="PANSVYE"/>
<dbReference type="OrthoDB" id="6085656at2759"/>
<dbReference type="PhylomeDB" id="P14003"/>
<dbReference type="SignaLink" id="P14003"/>
<dbReference type="ChiTaRS" id="h">
    <property type="organism name" value="fly"/>
</dbReference>
<dbReference type="GenomeRNAi" id="38995"/>
<dbReference type="PRO" id="PR:P14003"/>
<dbReference type="Proteomes" id="UP000000803">
    <property type="component" value="Chromosome 3L"/>
</dbReference>
<dbReference type="Bgee" id="FBgn0001168">
    <property type="expression patterns" value="Expressed in adult abdominal pericardial cell (Drosophila) in dorsal vessel heart and 231 other cell types or tissues"/>
</dbReference>
<dbReference type="GO" id="GO:0005634">
    <property type="term" value="C:nucleus"/>
    <property type="evidence" value="ECO:0000318"/>
    <property type="project" value="GO_Central"/>
</dbReference>
<dbReference type="GO" id="GO:0003677">
    <property type="term" value="F:DNA binding"/>
    <property type="evidence" value="ECO:0000314"/>
    <property type="project" value="UniProtKB"/>
</dbReference>
<dbReference type="GO" id="GO:0001227">
    <property type="term" value="F:DNA-binding transcription repressor activity, RNA polymerase II-specific"/>
    <property type="evidence" value="ECO:0000314"/>
    <property type="project" value="FlyBase"/>
</dbReference>
<dbReference type="GO" id="GO:0070888">
    <property type="term" value="F:E-box binding"/>
    <property type="evidence" value="ECO:0000314"/>
    <property type="project" value="FlyBase"/>
</dbReference>
<dbReference type="GO" id="GO:0046983">
    <property type="term" value="F:protein dimerization activity"/>
    <property type="evidence" value="ECO:0007669"/>
    <property type="project" value="InterPro"/>
</dbReference>
<dbReference type="GO" id="GO:0000978">
    <property type="term" value="F:RNA polymerase II cis-regulatory region sequence-specific DNA binding"/>
    <property type="evidence" value="ECO:0000314"/>
    <property type="project" value="FlyBase"/>
</dbReference>
<dbReference type="GO" id="GO:0001222">
    <property type="term" value="F:transcription corepressor binding"/>
    <property type="evidence" value="ECO:0000353"/>
    <property type="project" value="FlyBase"/>
</dbReference>
<dbReference type="GO" id="GO:0000902">
    <property type="term" value="P:cell morphogenesis"/>
    <property type="evidence" value="ECO:0000315"/>
    <property type="project" value="FlyBase"/>
</dbReference>
<dbReference type="GO" id="GO:0061024">
    <property type="term" value="P:membrane organization"/>
    <property type="evidence" value="ECO:0000304"/>
    <property type="project" value="FlyBase"/>
</dbReference>
<dbReference type="GO" id="GO:0045892">
    <property type="term" value="P:negative regulation of DNA-templated transcription"/>
    <property type="evidence" value="ECO:0000314"/>
    <property type="project" value="UniProtKB"/>
</dbReference>
<dbReference type="GO" id="GO:0000122">
    <property type="term" value="P:negative regulation of transcription by RNA polymerase II"/>
    <property type="evidence" value="ECO:0000314"/>
    <property type="project" value="UniProtKB"/>
</dbReference>
<dbReference type="GO" id="GO:0007399">
    <property type="term" value="P:nervous system development"/>
    <property type="evidence" value="ECO:0000304"/>
    <property type="project" value="FlyBase"/>
</dbReference>
<dbReference type="GO" id="GO:0007424">
    <property type="term" value="P:open tracheal system development"/>
    <property type="evidence" value="ECO:0000315"/>
    <property type="project" value="FlyBase"/>
</dbReference>
<dbReference type="GO" id="GO:0007366">
    <property type="term" value="P:periodic partitioning by pair rule gene"/>
    <property type="evidence" value="ECO:0000304"/>
    <property type="project" value="FlyBase"/>
</dbReference>
<dbReference type="GO" id="GO:0035289">
    <property type="term" value="P:posterior head segmentation"/>
    <property type="evidence" value="ECO:0000304"/>
    <property type="project" value="FlyBase"/>
</dbReference>
<dbReference type="GO" id="GO:0050767">
    <property type="term" value="P:regulation of neurogenesis"/>
    <property type="evidence" value="ECO:0000318"/>
    <property type="project" value="GO_Central"/>
</dbReference>
<dbReference type="GO" id="GO:0001666">
    <property type="term" value="P:response to hypoxia"/>
    <property type="evidence" value="ECO:0000315"/>
    <property type="project" value="FlyBase"/>
</dbReference>
<dbReference type="GO" id="GO:0007435">
    <property type="term" value="P:salivary gland morphogenesis"/>
    <property type="evidence" value="ECO:0000315"/>
    <property type="project" value="FlyBase"/>
</dbReference>
<dbReference type="GO" id="GO:0035290">
    <property type="term" value="P:trunk segmentation"/>
    <property type="evidence" value="ECO:0000304"/>
    <property type="project" value="FlyBase"/>
</dbReference>
<dbReference type="GO" id="GO:0035239">
    <property type="term" value="P:tube morphogenesis"/>
    <property type="evidence" value="ECO:0000315"/>
    <property type="project" value="FlyBase"/>
</dbReference>
<dbReference type="CDD" id="cd18913">
    <property type="entry name" value="bHLH-O_hairy_like"/>
    <property type="match status" value="1"/>
</dbReference>
<dbReference type="FunFam" id="4.10.280.10:FF:000009">
    <property type="entry name" value="Transcription factor HES-1"/>
    <property type="match status" value="1"/>
</dbReference>
<dbReference type="Gene3D" id="6.10.250.980">
    <property type="match status" value="1"/>
</dbReference>
<dbReference type="Gene3D" id="4.10.280.10">
    <property type="entry name" value="Helix-loop-helix DNA-binding domain"/>
    <property type="match status" value="1"/>
</dbReference>
<dbReference type="InterPro" id="IPR011598">
    <property type="entry name" value="bHLH_dom"/>
</dbReference>
<dbReference type="InterPro" id="IPR050370">
    <property type="entry name" value="HES_HEY"/>
</dbReference>
<dbReference type="InterPro" id="IPR036638">
    <property type="entry name" value="HLH_DNA-bd_sf"/>
</dbReference>
<dbReference type="InterPro" id="IPR003650">
    <property type="entry name" value="Orange_dom"/>
</dbReference>
<dbReference type="PANTHER" id="PTHR10985">
    <property type="entry name" value="BASIC HELIX-LOOP-HELIX TRANSCRIPTION FACTOR, HES-RELATED"/>
    <property type="match status" value="1"/>
</dbReference>
<dbReference type="Pfam" id="PF07527">
    <property type="entry name" value="Hairy_orange"/>
    <property type="match status" value="1"/>
</dbReference>
<dbReference type="Pfam" id="PF00010">
    <property type="entry name" value="HLH"/>
    <property type="match status" value="1"/>
</dbReference>
<dbReference type="SMART" id="SM00353">
    <property type="entry name" value="HLH"/>
    <property type="match status" value="1"/>
</dbReference>
<dbReference type="SMART" id="SM00511">
    <property type="entry name" value="ORANGE"/>
    <property type="match status" value="1"/>
</dbReference>
<dbReference type="SUPFAM" id="SSF47459">
    <property type="entry name" value="HLH, helix-loop-helix DNA-binding domain"/>
    <property type="match status" value="1"/>
</dbReference>
<dbReference type="SUPFAM" id="SSF158457">
    <property type="entry name" value="Orange domain-like"/>
    <property type="match status" value="1"/>
</dbReference>
<dbReference type="PROSITE" id="PS50888">
    <property type="entry name" value="BHLH"/>
    <property type="match status" value="1"/>
</dbReference>
<dbReference type="PROSITE" id="PS51054">
    <property type="entry name" value="ORANGE"/>
    <property type="match status" value="1"/>
</dbReference>
<feature type="chain" id="PRO_0000127181" description="Protein hairy">
    <location>
        <begin position="1"/>
        <end position="337"/>
    </location>
</feature>
<feature type="domain" description="bHLH" evidence="3">
    <location>
        <begin position="31"/>
        <end position="88"/>
    </location>
</feature>
<feature type="domain" description="Orange" evidence="2">
    <location>
        <begin position="107"/>
        <end position="136"/>
    </location>
</feature>
<feature type="region of interest" description="Interaction with Topors" evidence="6">
    <location>
        <begin position="29"/>
        <end position="48"/>
    </location>
</feature>
<feature type="region of interest" description="Disordered" evidence="4">
    <location>
        <begin position="146"/>
        <end position="178"/>
    </location>
</feature>
<feature type="region of interest" description="Disordered" evidence="4">
    <location>
        <begin position="259"/>
        <end position="311"/>
    </location>
</feature>
<feature type="short sequence motif" description="WRPW motif" evidence="8 9">
    <location>
        <begin position="334"/>
        <end position="337"/>
    </location>
</feature>
<feature type="compositionally biased region" description="Low complexity" evidence="4">
    <location>
        <begin position="263"/>
        <end position="301"/>
    </location>
</feature>
<feature type="sequence variant" description="In strain: R3-6, R3-105 and R3-107." evidence="5">
    <original>A</original>
    <variation>S</variation>
    <location>
        <position position="21"/>
    </location>
</feature>
<feature type="sequence variant" evidence="7">
    <original>P</original>
    <variation>S</variation>
    <location>
        <position position="292"/>
    </location>
</feature>
<name>HAIR_DROME</name>
<gene>
    <name evidence="11" type="primary">hry</name>
    <name evidence="10" type="synonym">h</name>
    <name evidence="11" type="ORF">CG6494</name>
</gene>
<sequence length="337" mass="37005">MVTGVTAANMTNVLGTAVVPAQLKETPLKSDRRSNKPIMEKRRRARINNCLNELKTLILDATKKDPARHSKLEKADILEKTVKHLQELQRQQAAMQQAADPKIVNKFKAGFADCVNEVSRFPGIEPAQRRRLLQHLSNCINGVKTELHQQQRQQQQQSIHAQMLPSPPSSPEQDSQQGAAAPYLFGIQQTASGYFLPNGMQVIPTKLPNGSIALVLPQSLPQQQQQQLLQHQQQQQQLAVAAAAAAAAAAQQQPMLVSMPQRTASTGSASSHSSAGYESAPGSSSSCSYAPPSPANSSYEPMDIKPSVIQRVPMEQQPLSLVIKKQIKEEEQPWRPW</sequence>
<keyword id="KW-0217">Developmental protein</keyword>
<keyword id="KW-0238">DNA-binding</keyword>
<keyword id="KW-0539">Nucleus</keyword>
<keyword id="KW-0562">Pair-rule protein</keyword>
<keyword id="KW-1185">Reference proteome</keyword>
<keyword id="KW-0678">Repressor</keyword>
<keyword id="KW-0804">Transcription</keyword>
<keyword id="KW-0805">Transcription regulation</keyword>
<keyword id="KW-0832">Ubl conjugation</keyword>
<evidence type="ECO:0000250" key="1">
    <source>
        <dbReference type="UniProtKB" id="Q26263"/>
    </source>
</evidence>
<evidence type="ECO:0000255" key="2">
    <source>
        <dbReference type="PROSITE-ProRule" id="PRU00380"/>
    </source>
</evidence>
<evidence type="ECO:0000255" key="3">
    <source>
        <dbReference type="PROSITE-ProRule" id="PRU00981"/>
    </source>
</evidence>
<evidence type="ECO:0000256" key="4">
    <source>
        <dbReference type="SAM" id="MobiDB-lite"/>
    </source>
</evidence>
<evidence type="ECO:0000269" key="5">
    <source>
    </source>
</evidence>
<evidence type="ECO:0000269" key="6">
    <source>
    </source>
</evidence>
<evidence type="ECO:0000269" key="7">
    <source>
    </source>
</evidence>
<evidence type="ECO:0000269" key="8">
    <source>
    </source>
</evidence>
<evidence type="ECO:0000269" key="9">
    <source>
    </source>
</evidence>
<evidence type="ECO:0000303" key="10">
    <source>
    </source>
</evidence>
<evidence type="ECO:0000312" key="11">
    <source>
        <dbReference type="FlyBase" id="FBgn0001168"/>
    </source>
</evidence>
<organism>
    <name type="scientific">Drosophila melanogaster</name>
    <name type="common">Fruit fly</name>
    <dbReference type="NCBI Taxonomy" id="7227"/>
    <lineage>
        <taxon>Eukaryota</taxon>
        <taxon>Metazoa</taxon>
        <taxon>Ecdysozoa</taxon>
        <taxon>Arthropoda</taxon>
        <taxon>Hexapoda</taxon>
        <taxon>Insecta</taxon>
        <taxon>Pterygota</taxon>
        <taxon>Neoptera</taxon>
        <taxon>Endopterygota</taxon>
        <taxon>Diptera</taxon>
        <taxon>Brachycera</taxon>
        <taxon>Muscomorpha</taxon>
        <taxon>Ephydroidea</taxon>
        <taxon>Drosophilidae</taxon>
        <taxon>Drosophila</taxon>
        <taxon>Sophophora</taxon>
    </lineage>
</organism>
<accession>P14003</accession>
<accession>A4V1N7</accession>
<accession>Q95NH3</accession>
<accession>Q95NU9</accession>
<accession>Q9VSN8</accession>